<feature type="initiator methionine" description="Removed; by host" evidence="1">
    <location>
        <position position="1"/>
    </location>
</feature>
<feature type="chain" id="PRO_0000261236" description="Gag polyprotein">
    <location>
        <begin position="2"/>
        <end position="511"/>
    </location>
</feature>
<feature type="chain" id="PRO_0000246422" description="Matrix protein p17" evidence="1">
    <location>
        <begin position="2"/>
        <end position="134"/>
    </location>
</feature>
<feature type="chain" id="PRO_0000246423" description="Capsid protein p24" evidence="1">
    <location>
        <begin position="135"/>
        <end position="365"/>
    </location>
</feature>
<feature type="peptide" id="PRO_0000246424" description="Spacer peptide 1" evidence="1">
    <location>
        <begin position="366"/>
        <end position="379"/>
    </location>
</feature>
<feature type="chain" id="PRO_0000246425" description="Nucleocapsid protein p7" evidence="1">
    <location>
        <begin position="380"/>
        <end position="436"/>
    </location>
</feature>
<feature type="peptide" id="PRO_0000246426" description="Spacer peptide 2" evidence="1">
    <location>
        <begin position="437"/>
        <end position="452"/>
    </location>
</feature>
<feature type="chain" id="PRO_0000246427" description="p6-gag" evidence="1">
    <location>
        <begin position="453"/>
        <end position="511"/>
    </location>
</feature>
<feature type="zinc finger region" description="CCHC-type 1" evidence="8">
    <location>
        <begin position="392"/>
        <end position="409"/>
    </location>
</feature>
<feature type="zinc finger region" description="CCHC-type 2" evidence="8">
    <location>
        <begin position="413"/>
        <end position="430"/>
    </location>
</feature>
<feature type="region of interest" description="Interaction with Gp41" evidence="6">
    <location>
        <begin position="7"/>
        <end position="31"/>
    </location>
</feature>
<feature type="region of interest" description="Interaction with host CALM1" evidence="5">
    <location>
        <begin position="8"/>
        <end position="43"/>
    </location>
</feature>
<feature type="region of interest" description="Interaction with host AP3D1" evidence="7">
    <location>
        <begin position="12"/>
        <end position="19"/>
    </location>
</feature>
<feature type="region of interest" description="Interaction with membrane phosphatidylinositol 4,5-bisphosphate and RNA" evidence="6">
    <location>
        <begin position="14"/>
        <end position="33"/>
    </location>
</feature>
<feature type="region of interest" description="Interaction with membrane phosphatidylinositol 4,5-bisphosphate" evidence="6">
    <location>
        <begin position="73"/>
        <end position="77"/>
    </location>
</feature>
<feature type="region of interest" description="Disordered" evidence="9">
    <location>
        <begin position="105"/>
        <end position="128"/>
    </location>
</feature>
<feature type="region of interest" description="Interaction with host PPIA/CYPA and NUP153" evidence="6">
    <location>
        <begin position="191"/>
        <end position="229"/>
    </location>
</feature>
<feature type="region of interest" description="PPIA/CYPA-binding loop" evidence="5">
    <location>
        <begin position="219"/>
        <end position="227"/>
    </location>
</feature>
<feature type="region of interest" description="Dimerization/Multimerization of capsid protein p24" evidence="5">
    <location>
        <begin position="279"/>
        <end position="365"/>
    </location>
</feature>
<feature type="region of interest" description="Disordered" evidence="9">
    <location>
        <begin position="440"/>
        <end position="511"/>
    </location>
</feature>
<feature type="short sequence motif" description="Nuclear export signal" evidence="1">
    <location>
        <begin position="16"/>
        <end position="22"/>
    </location>
</feature>
<feature type="short sequence motif" description="Nuclear localization signal" evidence="1">
    <location>
        <begin position="26"/>
        <end position="32"/>
    </location>
</feature>
<feature type="short sequence motif" description="PTAP/PSAP motif">
    <location>
        <begin position="461"/>
        <end position="464"/>
    </location>
</feature>
<feature type="short sequence motif" description="LYPX(n)L motif">
    <location>
        <begin position="493"/>
        <end position="503"/>
    </location>
</feature>
<feature type="compositionally biased region" description="Basic and acidic residues" evidence="9">
    <location>
        <begin position="105"/>
        <end position="119"/>
    </location>
</feature>
<feature type="compositionally biased region" description="Basic and acidic residues" evidence="9">
    <location>
        <begin position="472"/>
        <end position="490"/>
    </location>
</feature>
<feature type="site" description="Cleavage; by viral protease" evidence="1">
    <location>
        <begin position="134"/>
        <end position="135"/>
    </location>
</feature>
<feature type="site" description="Cleavage; by viral protease" evidence="1">
    <location>
        <begin position="365"/>
        <end position="366"/>
    </location>
</feature>
<feature type="site" description="Cleavage; by viral protease" evidence="1">
    <location>
        <begin position="379"/>
        <end position="380"/>
    </location>
</feature>
<feature type="site" description="Cleavage; by viral protease" evidence="1">
    <location>
        <begin position="436"/>
        <end position="437"/>
    </location>
</feature>
<feature type="site" description="Cleavage; by viral protease" evidence="1">
    <location>
        <begin position="452"/>
        <end position="453"/>
    </location>
</feature>
<feature type="modified residue" description="Asymmetric dimethylarginine; in Nucleocapsid protein p7; by host PRMT6" evidence="1">
    <location>
        <position position="389"/>
    </location>
</feature>
<feature type="modified residue" description="Asymmetric dimethylarginine; in Nucleocapsid protein p7; by host PRMT6" evidence="1">
    <location>
        <position position="411"/>
    </location>
</feature>
<feature type="lipid moiety-binding region" description="N-myristoyl glycine; by host" evidence="1">
    <location>
        <position position="2"/>
    </location>
</feature>
<reference key="1">
    <citation type="journal article" date="2004" name="AIDS">
        <title>Phylogenetic characteristics of three new HIV-1 N strains and implications for the origin of group N.</title>
        <authorList>
            <person name="Roques P."/>
            <person name="Robertson D.L."/>
            <person name="Souquiere S."/>
            <person name="Apetrei C."/>
            <person name="Nerrienet E."/>
            <person name="Barre-Sinoussi F."/>
            <person name="Muller-Trutwin M."/>
            <person name="Simon F."/>
        </authorList>
    </citation>
    <scope>NUCLEOTIDE SEQUENCE [GENOMIC DNA]</scope>
</reference>
<evidence type="ECO:0000250" key="1"/>
<evidence type="ECO:0000250" key="2">
    <source>
        <dbReference type="UniProtKB" id="P03347"/>
    </source>
</evidence>
<evidence type="ECO:0000250" key="3">
    <source>
        <dbReference type="UniProtKB" id="P03348"/>
    </source>
</evidence>
<evidence type="ECO:0000250" key="4">
    <source>
        <dbReference type="UniProtKB" id="P03349"/>
    </source>
</evidence>
<evidence type="ECO:0000250" key="5">
    <source>
        <dbReference type="UniProtKB" id="P04591"/>
    </source>
</evidence>
<evidence type="ECO:0000250" key="6">
    <source>
        <dbReference type="UniProtKB" id="P12493"/>
    </source>
</evidence>
<evidence type="ECO:0000250" key="7">
    <source>
        <dbReference type="UniProtKB" id="P12497"/>
    </source>
</evidence>
<evidence type="ECO:0000255" key="8">
    <source>
        <dbReference type="PROSITE-ProRule" id="PRU00047"/>
    </source>
</evidence>
<evidence type="ECO:0000256" key="9">
    <source>
        <dbReference type="SAM" id="MobiDB-lite"/>
    </source>
</evidence>
<evidence type="ECO:0000305" key="10"/>
<protein>
    <recommendedName>
        <fullName>Gag polyprotein</fullName>
    </recommendedName>
    <alternativeName>
        <fullName>Pr55Gag</fullName>
    </alternativeName>
    <component>
        <recommendedName>
            <fullName>Matrix protein p17</fullName>
            <shortName>MA</shortName>
        </recommendedName>
    </component>
    <component>
        <recommendedName>
            <fullName>Capsid protein p24</fullName>
            <shortName>CA</shortName>
        </recommendedName>
    </component>
    <component>
        <recommendedName>
            <fullName evidence="6">Spacer peptide 1</fullName>
            <shortName>SP1</shortName>
        </recommendedName>
        <alternativeName>
            <fullName>p2</fullName>
        </alternativeName>
    </component>
    <component>
        <recommendedName>
            <fullName>Nucleocapsid protein p7</fullName>
            <shortName>NC</shortName>
        </recommendedName>
    </component>
    <component>
        <recommendedName>
            <fullName evidence="6">Spacer peptide 2</fullName>
            <shortName>SP2</shortName>
        </recommendedName>
        <alternativeName>
            <fullName>p1</fullName>
        </alternativeName>
    </component>
    <component>
        <recommendedName>
            <fullName>p6-gag</fullName>
        </recommendedName>
    </component>
</protein>
<proteinExistence type="inferred from homology"/>
<gene>
    <name type="primary">gag</name>
</gene>
<organismHost>
    <name type="scientific">Homo sapiens</name>
    <name type="common">Human</name>
    <dbReference type="NCBI Taxonomy" id="9606"/>
</organismHost>
<organism>
    <name type="scientific">Human immunodeficiency virus type 1 group N (isolate YBF106)</name>
    <name type="common">HIV-1</name>
    <dbReference type="NCBI Taxonomy" id="388819"/>
    <lineage>
        <taxon>Viruses</taxon>
        <taxon>Riboviria</taxon>
        <taxon>Pararnavirae</taxon>
        <taxon>Artverviricota</taxon>
        <taxon>Revtraviricetes</taxon>
        <taxon>Ortervirales</taxon>
        <taxon>Retroviridae</taxon>
        <taxon>Orthoretrovirinae</taxon>
        <taxon>Lentivirus</taxon>
        <taxon>Human immunodeficiency virus type 1</taxon>
    </lineage>
</organism>
<name>GAG_HV1YB</name>
<accession>Q9IDV8</accession>
<keyword id="KW-0014">AIDS</keyword>
<keyword id="KW-0167">Capsid protein</keyword>
<keyword id="KW-1032">Host cell membrane</keyword>
<keyword id="KW-1035">Host cytoplasm</keyword>
<keyword id="KW-1039">Host endosome</keyword>
<keyword id="KW-1043">Host membrane</keyword>
<keyword id="KW-1048">Host nucleus</keyword>
<keyword id="KW-0945">Host-virus interaction</keyword>
<keyword id="KW-0449">Lipoprotein</keyword>
<keyword id="KW-0472">Membrane</keyword>
<keyword id="KW-0479">Metal-binding</keyword>
<keyword id="KW-0488">Methylation</keyword>
<keyword id="KW-0519">Myristate</keyword>
<keyword id="KW-0597">Phosphoprotein</keyword>
<keyword id="KW-0677">Repeat</keyword>
<keyword id="KW-0688">Ribosomal frameshifting</keyword>
<keyword id="KW-0694">RNA-binding</keyword>
<keyword id="KW-1198">Viral budding</keyword>
<keyword id="KW-1187">Viral budding via the host ESCRT complexes</keyword>
<keyword id="KW-0543">Viral nucleoprotein</keyword>
<keyword id="KW-1188">Viral release from host cell</keyword>
<keyword id="KW-0946">Virion</keyword>
<keyword id="KW-0862">Zinc</keyword>
<keyword id="KW-0863">Zinc-finger</keyword>
<sequence length="511" mass="56539">MGARASVLTGGKLDQWEAIYLRPGGKKKYRLKHLVWASRELERFACNPGLMDTANGCAQLINQLEPALKTGSEGLRSLXNTLAVLYCVHSNIPVHNTQEALDKIKEKQEQHKSEPKKPEAGTAAAADSSISRNYPLVQNAQGQMVHQPLTPRTLNAWVKVIEEKAFNPEIIPMFMALSEGATPSDLNSMLNTVGGHQAAMQMLKEVINEEAAEWDRTHPAPVGPLPPGQMRDPRGSDIAGTTSTLAEQVAWMTSNPPIPVGDIYRRWIVLGLNRIVRMYSPVSILEIKQGPKEPFRDYVDRFYKTLRAEQATQDVKNWMTETLLVQNANPDCKQILKALGPGATLEEMMTACQGVGGPAHKARVLAEAMAQAQTATSVFVQRGNFKGIRKTIKCFNCGKEGHLARNCKAPRRRGCWKCGQEGHQMKDCKNEGXQANFLGKGWSPFKGRPGNFPQTTTRREPTAPPLESYGSQEEKSTQGKEMQENQEKTETSLYPPLTSLRSLFGNDLSSQ</sequence>
<dbReference type="EMBL" id="AJ271370">
    <property type="protein sequence ID" value="CAB96339.1"/>
    <property type="molecule type" value="Genomic_DNA"/>
</dbReference>
<dbReference type="PRO" id="PR:Q9IDV8"/>
<dbReference type="Proteomes" id="UP000007714">
    <property type="component" value="Segment"/>
</dbReference>
<dbReference type="GO" id="GO:0042025">
    <property type="term" value="C:host cell nucleus"/>
    <property type="evidence" value="ECO:0007669"/>
    <property type="project" value="UniProtKB-SubCell"/>
</dbReference>
<dbReference type="GO" id="GO:0020002">
    <property type="term" value="C:host cell plasma membrane"/>
    <property type="evidence" value="ECO:0007669"/>
    <property type="project" value="UniProtKB-SubCell"/>
</dbReference>
<dbReference type="GO" id="GO:0072494">
    <property type="term" value="C:host multivesicular body"/>
    <property type="evidence" value="ECO:0007669"/>
    <property type="project" value="UniProtKB-SubCell"/>
</dbReference>
<dbReference type="GO" id="GO:0016020">
    <property type="term" value="C:membrane"/>
    <property type="evidence" value="ECO:0007669"/>
    <property type="project" value="UniProtKB-KW"/>
</dbReference>
<dbReference type="GO" id="GO:0019013">
    <property type="term" value="C:viral nucleocapsid"/>
    <property type="evidence" value="ECO:0007669"/>
    <property type="project" value="UniProtKB-KW"/>
</dbReference>
<dbReference type="GO" id="GO:0055036">
    <property type="term" value="C:virion membrane"/>
    <property type="evidence" value="ECO:0007669"/>
    <property type="project" value="UniProtKB-SubCell"/>
</dbReference>
<dbReference type="GO" id="GO:0003723">
    <property type="term" value="F:RNA binding"/>
    <property type="evidence" value="ECO:0007669"/>
    <property type="project" value="UniProtKB-KW"/>
</dbReference>
<dbReference type="GO" id="GO:0005198">
    <property type="term" value="F:structural molecule activity"/>
    <property type="evidence" value="ECO:0007669"/>
    <property type="project" value="InterPro"/>
</dbReference>
<dbReference type="GO" id="GO:0008270">
    <property type="term" value="F:zinc ion binding"/>
    <property type="evidence" value="ECO:0007669"/>
    <property type="project" value="UniProtKB-KW"/>
</dbReference>
<dbReference type="GO" id="GO:0039702">
    <property type="term" value="P:viral budding via host ESCRT complex"/>
    <property type="evidence" value="ECO:0007669"/>
    <property type="project" value="UniProtKB-KW"/>
</dbReference>
<dbReference type="GO" id="GO:0075523">
    <property type="term" value="P:viral translational frameshifting"/>
    <property type="evidence" value="ECO:0007669"/>
    <property type="project" value="UniProtKB-KW"/>
</dbReference>
<dbReference type="FunFam" id="1.10.1200.30:FF:000001">
    <property type="entry name" value="Gag polyprotein"/>
    <property type="match status" value="1"/>
</dbReference>
<dbReference type="Gene3D" id="1.10.1200.30">
    <property type="match status" value="1"/>
</dbReference>
<dbReference type="Gene3D" id="6.10.250.390">
    <property type="match status" value="1"/>
</dbReference>
<dbReference type="Gene3D" id="1.10.375.10">
    <property type="entry name" value="Human Immunodeficiency Virus Type 1 Capsid Protein"/>
    <property type="match status" value="1"/>
</dbReference>
<dbReference type="Gene3D" id="1.10.150.90">
    <property type="entry name" value="Immunodeficiency lentiviruses, gag gene matrix protein p17"/>
    <property type="match status" value="1"/>
</dbReference>
<dbReference type="Gene3D" id="1.20.5.760">
    <property type="entry name" value="Single helix bin"/>
    <property type="match status" value="1"/>
</dbReference>
<dbReference type="Gene3D" id="4.10.60.10">
    <property type="entry name" value="Zinc finger, CCHC-type"/>
    <property type="match status" value="1"/>
</dbReference>
<dbReference type="InterPro" id="IPR045345">
    <property type="entry name" value="Gag_p24_C"/>
</dbReference>
<dbReference type="InterPro" id="IPR014817">
    <property type="entry name" value="Gag_p6"/>
</dbReference>
<dbReference type="InterPro" id="IPR000071">
    <property type="entry name" value="Lentvrl_matrix_N"/>
</dbReference>
<dbReference type="InterPro" id="IPR012344">
    <property type="entry name" value="Matrix_HIV/RSV_N"/>
</dbReference>
<dbReference type="InterPro" id="IPR050195">
    <property type="entry name" value="Primate_lentivir_Gag_pol-like"/>
</dbReference>
<dbReference type="InterPro" id="IPR008916">
    <property type="entry name" value="Retrov_capsid_C"/>
</dbReference>
<dbReference type="InterPro" id="IPR008919">
    <property type="entry name" value="Retrov_capsid_N"/>
</dbReference>
<dbReference type="InterPro" id="IPR010999">
    <property type="entry name" value="Retrovr_matrix"/>
</dbReference>
<dbReference type="InterPro" id="IPR001878">
    <property type="entry name" value="Znf_CCHC"/>
</dbReference>
<dbReference type="InterPro" id="IPR036875">
    <property type="entry name" value="Znf_CCHC_sf"/>
</dbReference>
<dbReference type="PANTHER" id="PTHR40389:SF4">
    <property type="match status" value="1"/>
</dbReference>
<dbReference type="PANTHER" id="PTHR40389">
    <property type="entry name" value="ENDOGENOUS RETROVIRUS GROUP K MEMBER 24 GAG POLYPROTEIN-RELATED"/>
    <property type="match status" value="1"/>
</dbReference>
<dbReference type="Pfam" id="PF00540">
    <property type="entry name" value="Gag_p17"/>
    <property type="match status" value="1"/>
</dbReference>
<dbReference type="Pfam" id="PF00607">
    <property type="entry name" value="Gag_p24"/>
    <property type="match status" value="1"/>
</dbReference>
<dbReference type="Pfam" id="PF19317">
    <property type="entry name" value="Gag_p24_C"/>
    <property type="match status" value="1"/>
</dbReference>
<dbReference type="Pfam" id="PF08705">
    <property type="entry name" value="Gag_p6"/>
    <property type="match status" value="1"/>
</dbReference>
<dbReference type="Pfam" id="PF00098">
    <property type="entry name" value="zf-CCHC"/>
    <property type="match status" value="2"/>
</dbReference>
<dbReference type="PRINTS" id="PR00234">
    <property type="entry name" value="HIV1MATRIX"/>
</dbReference>
<dbReference type="SMART" id="SM00343">
    <property type="entry name" value="ZnF_C2HC"/>
    <property type="match status" value="2"/>
</dbReference>
<dbReference type="SUPFAM" id="SSF47836">
    <property type="entry name" value="Retroviral matrix proteins"/>
    <property type="match status" value="1"/>
</dbReference>
<dbReference type="SUPFAM" id="SSF47353">
    <property type="entry name" value="Retrovirus capsid dimerization domain-like"/>
    <property type="match status" value="1"/>
</dbReference>
<dbReference type="SUPFAM" id="SSF47943">
    <property type="entry name" value="Retrovirus capsid protein, N-terminal core domain"/>
    <property type="match status" value="1"/>
</dbReference>
<dbReference type="SUPFAM" id="SSF57756">
    <property type="entry name" value="Retrovirus zinc finger-like domains"/>
    <property type="match status" value="1"/>
</dbReference>
<dbReference type="PROSITE" id="PS50158">
    <property type="entry name" value="ZF_CCHC"/>
    <property type="match status" value="2"/>
</dbReference>
<comment type="function">
    <molecule>Gag polyprotein</molecule>
    <text evidence="5">Mediates, with Gag-Pol polyprotein, the essential events in virion assembly, including binding the plasma membrane, making the protein-protein interactions necessary to create spherical particles, recruiting the viral Env proteins, and packaging the genomic RNA via direct interactions with the RNA packaging sequence (Psi).</text>
</comment>
<comment type="function">
    <molecule>Matrix protein p17</molecule>
    <text evidence="1 6">Targets the polyprotein to the plasma membrane via a multipartite membrane-binding signal, that includes its myristoylated N-terminus (By similarity). Matrix protein is part of the pre-integration complex. Implicated in the release from host cell mediated by Vpu. Binds to RNA (By similarity).</text>
</comment>
<comment type="function">
    <molecule>Capsid protein p24</molecule>
    <text evidence="5 6">Forms the conical core that encapsulates the genomic RNA-nucleocapsid complex in the virion. Most core are conical, with only 7% tubular. The core is constituted by capsid protein hexamer subunits. The core is disassembled soon after virion entry (By similarity). The capsid promotes immune invasion by cloaking viral DNA from CGAS detection (By similarity). Host restriction factors such as TRIM5-alpha or TRIMCyp bind retroviral capsids and cause premature capsid disassembly, leading to blocks in reverse transcription. Capsid restriction by TRIM5 is one of the factors which restricts HIV-1 to the human species. Host PIN1 apparently facilitates the virion uncoating (By similarity). On the other hand, interactions with PDZD8 or CYPA stabilize the capsid (By similarity).</text>
</comment>
<comment type="function">
    <molecule>Nucleocapsid protein p7</molecule>
    <text evidence="5">Encapsulates and protects viral dimeric unspliced genomic RNA (gRNA). Binds these RNAs through its zinc fingers. Acts as a nucleic acid chaperone which is involved in rearangement of nucleic acid secondary structure during gRNA retrotranscription. Also facilitates template switch leading to recombination. As part of the polyprotein, participates in gRNA dimerization, packaging, tRNA incorporation and virion assembly.</text>
</comment>
<comment type="function">
    <molecule>p6-gag</molecule>
    <text evidence="6">Plays a role in budding of the assembled particle by interacting with the host class E VPS proteins TSG101 and PDCD6IP/AIP1.</text>
</comment>
<comment type="subunit">
    <molecule>Gag polyprotein</molecule>
    <text evidence="4 5">Homotrimer; further assembles as hexamers of trimers. Oligomerization possibly creates a central hole into which the cytoplasmic tail of the gp41 envelope protein may be inserted. Interacts with host TRIM22; this interaction seems to disrupt proper trafficking of Gag polyprotein and may interfere with budding. Interacts with host PDZD8. When ubiquitinated, interacts (via p6-gag domain) with host PACSIN2; this interaction allows PACSIN2 recruitment to viral assembly sites and its subsequent incorporation into virions. Interacts with MOV10 (By similarity).</text>
</comment>
<comment type="subunit">
    <molecule>Matrix protein p17</molecule>
    <text evidence="5 6">Homotrimer; further assembles as hexamers of trimers. Interacts with gp41 (via C-terminus). Interacts with host CALM1; this interaction induces a conformational change in the Matrix protein, triggering exposure of the myristate group. Interacts with host AP3D1; this interaction allows the polyprotein trafficking to multivesicular bodies during virus assembly. Part of the pre-integration complex (PIC) which is composed of viral genome, matrix protein, Vpr and integrase.</text>
</comment>
<comment type="subunit">
    <molecule>Capsid protein p24</molecule>
    <text evidence="5 6">Homodimer; the homodimer further multimerizes as homohexamers or homopentamers (By similarity). Interacts with host NUP98 (By similarity). Interacts with host PPIA/CYPA; this interaction stabilizes the capsid (By similarity). Interacts with host NUP153 (By similarity). Interacts with host PDZD8; this interaction stabilizes the capsid. Interacts with host TRIM5; this interaction destabilizes the capsid (By similarity). Interacts with host CPSF6 (By similarity). Interacts with host NONO; the interaction is weak (By similarity).</text>
</comment>
<comment type="subunit">
    <molecule>Nucleocapsid protein p7</molecule>
    <text evidence="6">Interacts with host NUP98.</text>
</comment>
<comment type="subunit">
    <molecule>p6-gag</molecule>
    <text evidence="3 6">Interacts with Vpr; this interaction allows Vpr incorporation into the virion. Interacts with host TSG101. p6-gag interacts with host PDCD6IP/AIP1.</text>
</comment>
<comment type="subcellular location">
    <molecule>Gag polyprotein</molecule>
    <subcellularLocation>
        <location evidence="6">Host cell membrane</location>
        <topology evidence="6">Lipid-anchor</topology>
    </subcellularLocation>
    <subcellularLocation>
        <location evidence="6">Host endosome</location>
        <location evidence="6">Host multivesicular body</location>
    </subcellularLocation>
    <text evidence="6">These locations are probably linked to virus assembly sites. The main location is the cell membrane, but under some circumstances, late endosomal compartments can serve as productive sites for virion assembly.</text>
</comment>
<comment type="subcellular location">
    <molecule>Matrix protein p17</molecule>
    <subcellularLocation>
        <location evidence="6">Virion membrane</location>
        <topology evidence="6">Lipid-anchor</topology>
    </subcellularLocation>
    <subcellularLocation>
        <location evidence="1">Host nucleus</location>
    </subcellularLocation>
    <subcellularLocation>
        <location evidence="1">Host cytoplasm</location>
    </subcellularLocation>
</comment>
<comment type="subcellular location">
    <molecule>Capsid protein p24</molecule>
    <subcellularLocation>
        <location evidence="6">Virion</location>
    </subcellularLocation>
</comment>
<comment type="subcellular location">
    <molecule>Nucleocapsid protein p7</molecule>
    <subcellularLocation>
        <location evidence="6">Virion</location>
    </subcellularLocation>
</comment>
<comment type="alternative products">
    <event type="ribosomal frameshifting"/>
    <isoform>
        <id>Q9IDV8-1</id>
        <name>Gag polyprotein</name>
        <sequence type="displayed"/>
    </isoform>
    <isoform>
        <id>Q9IDV9-1</id>
        <name>Gag-Pol polyprotein</name>
        <sequence type="external"/>
    </isoform>
    <text>Translation results in the formation of the Gag polyprotein most of the time. Ribosomal frameshifting at the gag-pol genes boundary occurs at low frequency and produces the Gag-Pol polyprotein. This strategy of translation probably allows the virus to modulate the quantity of each viral protein. Maintenance of a correct Gag to Gag-Pol ratio is essential for RNA dimerization and viral infectivity.</text>
</comment>
<comment type="domain">
    <text evidence="6">Late-budding domains (L domains) are short sequence motifs essential for viral particle budding. They recruit proteins of the host ESCRT machinery (Endosomal Sorting Complex Required for Transport) or ESCRT-associated proteins. p6-gag contains two L domains: a PTAP/PSAP motif, which interacts with the UEV domain of TSG101 and a LYPX(n)L motif which interacts with PDCD6IP/AIP1.</text>
</comment>
<comment type="PTM">
    <text evidence="6">Gag-Pol polyprotein: Specific enzymatic cleavages by the viral protease yield mature proteins.</text>
</comment>
<comment type="PTM">
    <molecule>Matrix protein p17</molecule>
    <text evidence="5">Tyrosine phosphorylated presumably in the virion by a host kinase. Phosphorylation is apparently not a major regulator of membrane association.</text>
</comment>
<comment type="PTM">
    <text evidence="6">Capsid protein p24 is phosphorylated possibly by host MAPK1; this phosphorylation is necessary for Pin1-mediated virion uncoating.</text>
</comment>
<comment type="PTM">
    <text evidence="2">Nucleocapsid protein p7 is methylated by host PRMT6, impairing its function by reducing RNA annealing and the initiation of reverse transcription.</text>
</comment>
<comment type="miscellaneous">
    <text>HIV-1 lineages are divided in three main groups, M (for Major), O (for Outlier), and N (for New, or Non-M, Non-O). The vast majority of strains found worldwide belong to the group M. Group O seems to be endemic to and largely confined to Cameroon and neighboring countries in West Central Africa, where these viruses represent a small minority of HIV-1 strains. The group N is represented by a limited number of isolates from Cameroonian persons. The group M is further subdivided in 9 clades or subtypes (A to D, F to H, J and K).</text>
</comment>
<comment type="miscellaneous">
    <molecule>Isoform Gag polyprotein</molecule>
    <text>Produced by conventional translation.</text>
</comment>
<comment type="similarity">
    <text evidence="10">Belongs to the primate lentivirus group gag polyprotein family.</text>
</comment>